<accession>Q6Z4P2</accession>
<dbReference type="EC" id="3.6.1.5"/>
<dbReference type="EMBL" id="AP005167">
    <property type="protein sequence ID" value="BAC83798.1"/>
    <property type="molecule type" value="Genomic_DNA"/>
</dbReference>
<dbReference type="EMBL" id="AP008213">
    <property type="protein sequence ID" value="BAF22577.1"/>
    <property type="molecule type" value="Genomic_DNA"/>
</dbReference>
<dbReference type="EMBL" id="AP014963">
    <property type="status" value="NOT_ANNOTATED_CDS"/>
    <property type="molecule type" value="Genomic_DNA"/>
</dbReference>
<dbReference type="EMBL" id="CM000144">
    <property type="protein sequence ID" value="EAZ41118.1"/>
    <property type="molecule type" value="Genomic_DNA"/>
</dbReference>
<dbReference type="EMBL" id="AK066262">
    <property type="status" value="NOT_ANNOTATED_CDS"/>
    <property type="molecule type" value="mRNA"/>
</dbReference>
<dbReference type="RefSeq" id="XP_015647007.1">
    <property type="nucleotide sequence ID" value="XM_015791521.1"/>
</dbReference>
<dbReference type="SMR" id="Q6Z4P2"/>
<dbReference type="FunCoup" id="Q6Z4P2">
    <property type="interactions" value="3377"/>
</dbReference>
<dbReference type="STRING" id="39947.Q6Z4P2"/>
<dbReference type="PaxDb" id="39947-Q6Z4P2"/>
<dbReference type="KEGG" id="dosa:Os07g0682800"/>
<dbReference type="eggNOG" id="KOG1385">
    <property type="taxonomic scope" value="Eukaryota"/>
</dbReference>
<dbReference type="HOGENOM" id="CLU_010246_0_0_1"/>
<dbReference type="InParanoid" id="Q6Z4P2"/>
<dbReference type="OrthoDB" id="6372431at2759"/>
<dbReference type="Proteomes" id="UP000000763">
    <property type="component" value="Chromosome 7"/>
</dbReference>
<dbReference type="Proteomes" id="UP000007752">
    <property type="component" value="Chromosome 7"/>
</dbReference>
<dbReference type="Proteomes" id="UP000059680">
    <property type="component" value="Chromosome 7"/>
</dbReference>
<dbReference type="GO" id="GO:0016020">
    <property type="term" value="C:membrane"/>
    <property type="evidence" value="ECO:0000318"/>
    <property type="project" value="GO_Central"/>
</dbReference>
<dbReference type="GO" id="GO:0004050">
    <property type="term" value="F:apyrase activity"/>
    <property type="evidence" value="ECO:0007669"/>
    <property type="project" value="UniProtKB-EC"/>
</dbReference>
<dbReference type="GO" id="GO:0005524">
    <property type="term" value="F:ATP binding"/>
    <property type="evidence" value="ECO:0007669"/>
    <property type="project" value="UniProtKB-KW"/>
</dbReference>
<dbReference type="GO" id="GO:0017110">
    <property type="term" value="F:nucleoside diphosphate phosphatase activity"/>
    <property type="evidence" value="ECO:0000318"/>
    <property type="project" value="GO_Central"/>
</dbReference>
<dbReference type="GO" id="GO:0009134">
    <property type="term" value="P:nucleoside diphosphate catabolic process"/>
    <property type="evidence" value="ECO:0000318"/>
    <property type="project" value="GO_Central"/>
</dbReference>
<dbReference type="CDD" id="cd24041">
    <property type="entry name" value="ASKHA_NBD_AtAPY1-like"/>
    <property type="match status" value="1"/>
</dbReference>
<dbReference type="FunFam" id="3.30.420.150:FF:000008">
    <property type="entry name" value="Apyrase 1"/>
    <property type="match status" value="1"/>
</dbReference>
<dbReference type="Gene3D" id="3.30.420.40">
    <property type="match status" value="1"/>
</dbReference>
<dbReference type="Gene3D" id="3.30.420.150">
    <property type="entry name" value="Exopolyphosphatase. Domain 2"/>
    <property type="match status" value="1"/>
</dbReference>
<dbReference type="InterPro" id="IPR000407">
    <property type="entry name" value="GDA1_CD39_NTPase"/>
</dbReference>
<dbReference type="PANTHER" id="PTHR11782">
    <property type="entry name" value="ADENOSINE/GUANOSINE DIPHOSPHATASE"/>
    <property type="match status" value="1"/>
</dbReference>
<dbReference type="PANTHER" id="PTHR11782:SF48">
    <property type="entry name" value="APYRASE 2-RELATED"/>
    <property type="match status" value="1"/>
</dbReference>
<dbReference type="Pfam" id="PF01150">
    <property type="entry name" value="GDA1_CD39"/>
    <property type="match status" value="1"/>
</dbReference>
<dbReference type="PROSITE" id="PS01238">
    <property type="entry name" value="GDA1_CD39_NTPASE"/>
    <property type="match status" value="1"/>
</dbReference>
<comment type="function">
    <text evidence="1">Catalyzes the hydrolysis of phosphoanhydride bonds of nucleoside tri- and di-phosphates.</text>
</comment>
<comment type="catalytic activity">
    <reaction>
        <text>a ribonucleoside 5'-triphosphate + 2 H2O = a ribonucleoside 5'-phosphate + 2 phosphate + 2 H(+)</text>
        <dbReference type="Rhea" id="RHEA:36795"/>
        <dbReference type="ChEBI" id="CHEBI:15377"/>
        <dbReference type="ChEBI" id="CHEBI:15378"/>
        <dbReference type="ChEBI" id="CHEBI:43474"/>
        <dbReference type="ChEBI" id="CHEBI:58043"/>
        <dbReference type="ChEBI" id="CHEBI:61557"/>
        <dbReference type="EC" id="3.6.1.5"/>
    </reaction>
</comment>
<comment type="cofactor">
    <cofactor evidence="1">
        <name>Ca(2+)</name>
        <dbReference type="ChEBI" id="CHEBI:29108"/>
    </cofactor>
</comment>
<comment type="subcellular location">
    <subcellularLocation>
        <location evidence="1">Membrane</location>
        <topology evidence="1">Single-pass type II membrane protein</topology>
    </subcellularLocation>
</comment>
<comment type="similarity">
    <text evidence="3">Belongs to the GDA1/CD39 NTPase family.</text>
</comment>
<comment type="sequence caution" evidence="3">
    <conflict type="erroneous termination">
        <sequence resource="EMBL" id="AK066262"/>
    </conflict>
    <text>Truncated C-terminus.</text>
</comment>
<name>APY2_ORYSJ</name>
<gene>
    <name type="primary">APY2</name>
    <name type="ordered locus">Os07g0682800</name>
    <name type="ordered locus">LOC_Os07g48430</name>
    <name type="ORF">OsJ_25612</name>
    <name type="ORF">OSJNBa0060O17.4</name>
</gene>
<feature type="chain" id="PRO_0000419908" description="Probable apyrase 2">
    <location>
        <begin position="1"/>
        <end position="467"/>
    </location>
</feature>
<feature type="topological domain" description="Cytoplasmic" evidence="2">
    <location>
        <begin position="1"/>
        <end position="25"/>
    </location>
</feature>
<feature type="transmembrane region" description="Helical; Signal-anchor for type II membrane protein" evidence="2">
    <location>
        <begin position="26"/>
        <end position="46"/>
    </location>
</feature>
<feature type="topological domain" description="Extracellular" evidence="2">
    <location>
        <begin position="47"/>
        <end position="467"/>
    </location>
</feature>
<feature type="active site" description="Proton acceptor" evidence="1">
    <location>
        <position position="192"/>
    </location>
</feature>
<feature type="binding site" evidence="3">
    <location>
        <begin position="70"/>
        <end position="80"/>
    </location>
    <ligand>
        <name>ATP</name>
        <dbReference type="ChEBI" id="CHEBI:30616"/>
    </ligand>
</feature>
<feature type="binding site" evidence="3">
    <location>
        <begin position="216"/>
        <end position="226"/>
    </location>
    <ligand>
        <name>ATP</name>
        <dbReference type="ChEBI" id="CHEBI:30616"/>
    </ligand>
</feature>
<reference key="1">
    <citation type="journal article" date="2005" name="Nature">
        <title>The map-based sequence of the rice genome.</title>
        <authorList>
            <consortium name="International rice genome sequencing project (IRGSP)"/>
        </authorList>
    </citation>
    <scope>NUCLEOTIDE SEQUENCE [LARGE SCALE GENOMIC DNA]</scope>
    <source>
        <strain>cv. Nipponbare</strain>
    </source>
</reference>
<reference key="2">
    <citation type="journal article" date="2008" name="Nucleic Acids Res.">
        <title>The rice annotation project database (RAP-DB): 2008 update.</title>
        <authorList>
            <consortium name="The rice annotation project (RAP)"/>
        </authorList>
    </citation>
    <scope>GENOME REANNOTATION</scope>
    <source>
        <strain>cv. Nipponbare</strain>
    </source>
</reference>
<reference key="3">
    <citation type="journal article" date="2013" name="Rice">
        <title>Improvement of the Oryza sativa Nipponbare reference genome using next generation sequence and optical map data.</title>
        <authorList>
            <person name="Kawahara Y."/>
            <person name="de la Bastide M."/>
            <person name="Hamilton J.P."/>
            <person name="Kanamori H."/>
            <person name="McCombie W.R."/>
            <person name="Ouyang S."/>
            <person name="Schwartz D.C."/>
            <person name="Tanaka T."/>
            <person name="Wu J."/>
            <person name="Zhou S."/>
            <person name="Childs K.L."/>
            <person name="Davidson R.M."/>
            <person name="Lin H."/>
            <person name="Quesada-Ocampo L."/>
            <person name="Vaillancourt B."/>
            <person name="Sakai H."/>
            <person name="Lee S.S."/>
            <person name="Kim J."/>
            <person name="Numa H."/>
            <person name="Itoh T."/>
            <person name="Buell C.R."/>
            <person name="Matsumoto T."/>
        </authorList>
    </citation>
    <scope>GENOME REANNOTATION</scope>
    <source>
        <strain>cv. Nipponbare</strain>
    </source>
</reference>
<reference key="4">
    <citation type="journal article" date="2005" name="PLoS Biol.">
        <title>The genomes of Oryza sativa: a history of duplications.</title>
        <authorList>
            <person name="Yu J."/>
            <person name="Wang J."/>
            <person name="Lin W."/>
            <person name="Li S."/>
            <person name="Li H."/>
            <person name="Zhou J."/>
            <person name="Ni P."/>
            <person name="Dong W."/>
            <person name="Hu S."/>
            <person name="Zeng C."/>
            <person name="Zhang J."/>
            <person name="Zhang Y."/>
            <person name="Li R."/>
            <person name="Xu Z."/>
            <person name="Li S."/>
            <person name="Li X."/>
            <person name="Zheng H."/>
            <person name="Cong L."/>
            <person name="Lin L."/>
            <person name="Yin J."/>
            <person name="Geng J."/>
            <person name="Li G."/>
            <person name="Shi J."/>
            <person name="Liu J."/>
            <person name="Lv H."/>
            <person name="Li J."/>
            <person name="Wang J."/>
            <person name="Deng Y."/>
            <person name="Ran L."/>
            <person name="Shi X."/>
            <person name="Wang X."/>
            <person name="Wu Q."/>
            <person name="Li C."/>
            <person name="Ren X."/>
            <person name="Wang J."/>
            <person name="Wang X."/>
            <person name="Li D."/>
            <person name="Liu D."/>
            <person name="Zhang X."/>
            <person name="Ji Z."/>
            <person name="Zhao W."/>
            <person name="Sun Y."/>
            <person name="Zhang Z."/>
            <person name="Bao J."/>
            <person name="Han Y."/>
            <person name="Dong L."/>
            <person name="Ji J."/>
            <person name="Chen P."/>
            <person name="Wu S."/>
            <person name="Liu J."/>
            <person name="Xiao Y."/>
            <person name="Bu D."/>
            <person name="Tan J."/>
            <person name="Yang L."/>
            <person name="Ye C."/>
            <person name="Zhang J."/>
            <person name="Xu J."/>
            <person name="Zhou Y."/>
            <person name="Yu Y."/>
            <person name="Zhang B."/>
            <person name="Zhuang S."/>
            <person name="Wei H."/>
            <person name="Liu B."/>
            <person name="Lei M."/>
            <person name="Yu H."/>
            <person name="Li Y."/>
            <person name="Xu H."/>
            <person name="Wei S."/>
            <person name="He X."/>
            <person name="Fang L."/>
            <person name="Zhang Z."/>
            <person name="Zhang Y."/>
            <person name="Huang X."/>
            <person name="Su Z."/>
            <person name="Tong W."/>
            <person name="Li J."/>
            <person name="Tong Z."/>
            <person name="Li S."/>
            <person name="Ye J."/>
            <person name="Wang L."/>
            <person name="Fang L."/>
            <person name="Lei T."/>
            <person name="Chen C.-S."/>
            <person name="Chen H.-C."/>
            <person name="Xu Z."/>
            <person name="Li H."/>
            <person name="Huang H."/>
            <person name="Zhang F."/>
            <person name="Xu H."/>
            <person name="Li N."/>
            <person name="Zhao C."/>
            <person name="Li S."/>
            <person name="Dong L."/>
            <person name="Huang Y."/>
            <person name="Li L."/>
            <person name="Xi Y."/>
            <person name="Qi Q."/>
            <person name="Li W."/>
            <person name="Zhang B."/>
            <person name="Hu W."/>
            <person name="Zhang Y."/>
            <person name="Tian X."/>
            <person name="Jiao Y."/>
            <person name="Liang X."/>
            <person name="Jin J."/>
            <person name="Gao L."/>
            <person name="Zheng W."/>
            <person name="Hao B."/>
            <person name="Liu S.-M."/>
            <person name="Wang W."/>
            <person name="Yuan L."/>
            <person name="Cao M."/>
            <person name="McDermott J."/>
            <person name="Samudrala R."/>
            <person name="Wang J."/>
            <person name="Wong G.K.-S."/>
            <person name="Yang H."/>
        </authorList>
    </citation>
    <scope>NUCLEOTIDE SEQUENCE [LARGE SCALE GENOMIC DNA]</scope>
    <source>
        <strain>cv. Nipponbare</strain>
    </source>
</reference>
<reference key="5">
    <citation type="journal article" date="2003" name="Science">
        <title>Collection, mapping, and annotation of over 28,000 cDNA clones from japonica rice.</title>
        <authorList>
            <consortium name="The rice full-length cDNA consortium"/>
        </authorList>
    </citation>
    <scope>NUCLEOTIDE SEQUENCE [LARGE SCALE MRNA]</scope>
    <source>
        <strain>cv. Nipponbare</strain>
    </source>
</reference>
<organism>
    <name type="scientific">Oryza sativa subsp. japonica</name>
    <name type="common">Rice</name>
    <dbReference type="NCBI Taxonomy" id="39947"/>
    <lineage>
        <taxon>Eukaryota</taxon>
        <taxon>Viridiplantae</taxon>
        <taxon>Streptophyta</taxon>
        <taxon>Embryophyta</taxon>
        <taxon>Tracheophyta</taxon>
        <taxon>Spermatophyta</taxon>
        <taxon>Magnoliopsida</taxon>
        <taxon>Liliopsida</taxon>
        <taxon>Poales</taxon>
        <taxon>Poaceae</taxon>
        <taxon>BOP clade</taxon>
        <taxon>Oryzoideae</taxon>
        <taxon>Oryzeae</taxon>
        <taxon>Oryzinae</taxon>
        <taxon>Oryza</taxon>
        <taxon>Oryza sativa</taxon>
    </lineage>
</organism>
<keyword id="KW-0067">ATP-binding</keyword>
<keyword id="KW-0106">Calcium</keyword>
<keyword id="KW-0378">Hydrolase</keyword>
<keyword id="KW-0472">Membrane</keyword>
<keyword id="KW-0547">Nucleotide-binding</keyword>
<keyword id="KW-1185">Reference proteome</keyword>
<keyword id="KW-0735">Signal-anchor</keyword>
<keyword id="KW-0812">Transmembrane</keyword>
<keyword id="KW-1133">Transmembrane helix</keyword>
<sequence>MRRYSALPGGGARPDTLADRLHRYRGVLLVILAPLALVSLVLLLMPRSPASSSAAAGRRWGPLDANKYAVIFDAGSSGSRVHVFRFDANLDLLHIGDQIELFVQKKPGLSEYANNPQEAAKSLVSLLEDAKRVVPVELRGQTPVRVGATAGLRALGAEKSEEILQAVRDLLREKSSFKTQPDWVTVLDGPQEGAYEWVTINYLLGKLGKTYADTVGVVDLGGGSVQMAYAIAEKDAVKAPKPSEGEDSYVKKLFLKGTTYYLYVHSYLHYGLLAARAEILKAGNGKGYSYCTLEGHQGQYKYGNGKFEASASPSGASYSKCRDDVVKALKVDQACTHMKCSFGGIWNGGGGAGQKNLFVASFFFDRAAEAGFVNPKAPVAKVKPSDFEKAAKRACKLNLKDAEAAYPGVQKDNIPYICMDLVYQYTLLVDGFGVGSHQEMTLVKKVPYSNAFVEAAWPLGSAIEVAS</sequence>
<proteinExistence type="evidence at transcript level"/>
<evidence type="ECO:0000250" key="1"/>
<evidence type="ECO:0000255" key="2"/>
<evidence type="ECO:0000305" key="3"/>
<protein>
    <recommendedName>
        <fullName>Probable apyrase 2</fullName>
        <shortName>OsAPY2</shortName>
        <ecNumber>3.6.1.5</ecNumber>
    </recommendedName>
    <alternativeName>
        <fullName>ATP-diphosphatase</fullName>
    </alternativeName>
    <alternativeName>
        <fullName>ATP-diphosphohydrolase</fullName>
    </alternativeName>
    <alternativeName>
        <fullName>Adenosine diphosphatase</fullName>
        <shortName>ADPase</shortName>
    </alternativeName>
</protein>